<sequence>MQHEFSDEEFIALISPEIEEEVEQQINLAAERQNPIIGWDEFAGYYS</sequence>
<organism>
    <name type="scientific">Salmonella phage P22</name>
    <name type="common">Bacteriophage P22</name>
    <dbReference type="NCBI Taxonomy" id="10754"/>
    <lineage>
        <taxon>Viruses</taxon>
        <taxon>Duplodnaviria</taxon>
        <taxon>Heunggongvirae</taxon>
        <taxon>Uroviricota</taxon>
        <taxon>Caudoviricetes</taxon>
        <taxon>Lederbergvirus</taxon>
    </lineage>
</organism>
<feature type="chain" id="PRO_0000077746" description="Accessory recombination function protein">
    <location>
        <begin position="1"/>
        <end position="47"/>
    </location>
</feature>
<keyword id="KW-1185">Reference proteome</keyword>
<proteinExistence type="predicted"/>
<reference key="1">
    <citation type="journal article" date="1989" name="J. Mol. Biol.">
        <title>Genetic structure of the bacteriophage P22 PL operon.</title>
        <authorList>
            <person name="Semerjian A.V."/>
            <person name="Malloy D.C."/>
            <person name="Poteete A.R."/>
        </authorList>
    </citation>
    <scope>NUCLEOTIDE SEQUENCE [GENOMIC DNA]</scope>
</reference>
<reference key="2">
    <citation type="journal article" date="2000" name="J. Bacteriol.">
        <title>Sequence of the genome of Salmonella bacteriophage P22.</title>
        <authorList>
            <person name="Vander Byl C.S."/>
            <person name="Kropinski A.M.B."/>
        </authorList>
    </citation>
    <scope>NUCLEOTIDE SEQUENCE [LARGE SCALE GENOMIC DNA]</scope>
</reference>
<reference key="3">
    <citation type="journal article" date="2003" name="J. Bacteriol.">
        <title>Corrected sequence of the bacteriophage P22 genome.</title>
        <authorList>
            <person name="Pedulla M.L."/>
            <person name="Ford M.E."/>
            <person name="Karthikeyan T."/>
            <person name="Houtz J.M."/>
            <person name="Hendrix R.W."/>
            <person name="Hatfull G.F."/>
            <person name="Poteete A.R."/>
            <person name="Gilcrease E.B."/>
            <person name="Winn-Stapley D.A."/>
            <person name="Casjens S.R."/>
        </authorList>
    </citation>
    <scope>NUCLEOTIDE SEQUENCE [LARGE SCALE GENOMIC DNA]</scope>
</reference>
<name>VARF_BPP22</name>
<dbReference type="EMBL" id="X15637">
    <property type="protein sequence ID" value="CAA33652.1"/>
    <property type="molecule type" value="Genomic_DNA"/>
</dbReference>
<dbReference type="EMBL" id="AF217253">
    <property type="protein sequence ID" value="AAF75015.1"/>
    <property type="molecule type" value="Genomic_DNA"/>
</dbReference>
<dbReference type="EMBL" id="BK000583">
    <property type="protein sequence ID" value="DAA01012.1"/>
    <property type="molecule type" value="Genomic_DNA"/>
</dbReference>
<dbReference type="PIR" id="S04249">
    <property type="entry name" value="W2BP22"/>
</dbReference>
<dbReference type="RefSeq" id="NP_059597.1">
    <property type="nucleotide sequence ID" value="NC_002371.2"/>
</dbReference>
<dbReference type="SMR" id="P14112"/>
<dbReference type="GeneID" id="1262850"/>
<dbReference type="KEGG" id="vg:1262850"/>
<dbReference type="OrthoDB" id="26828at10239"/>
<dbReference type="Proteomes" id="UP000001795">
    <property type="component" value="Segment"/>
</dbReference>
<dbReference type="Proteomes" id="UP000007960">
    <property type="component" value="Segment"/>
</dbReference>
<dbReference type="InterPro" id="IPR020293">
    <property type="entry name" value="Arf"/>
</dbReference>
<dbReference type="Pfam" id="PF17585">
    <property type="entry name" value="Phage_Arf"/>
    <property type="match status" value="1"/>
</dbReference>
<protein>
    <recommendedName>
        <fullName>Accessory recombination function protein</fullName>
    </recommendedName>
</protein>
<comment type="function">
    <text>Arf may be recombination-related.</text>
</comment>
<gene>
    <name type="primary">arf</name>
</gene>
<accession>P14112</accession>
<accession>Q7PCG1</accession>
<organismHost>
    <name type="scientific">Salmonella typhimurium</name>
    <dbReference type="NCBI Taxonomy" id="90371"/>
</organismHost>